<dbReference type="EC" id="2.4.1.-"/>
<dbReference type="EMBL" id="AC004681">
    <property type="protein sequence ID" value="AAC25943.1"/>
    <property type="status" value="ALT_SEQ"/>
    <property type="molecule type" value="Genomic_DNA"/>
</dbReference>
<dbReference type="EMBL" id="CP002685">
    <property type="protein sequence ID" value="AEC08705.1"/>
    <property type="molecule type" value="Genomic_DNA"/>
</dbReference>
<dbReference type="PIR" id="T02560">
    <property type="entry name" value="T02560"/>
</dbReference>
<dbReference type="SMR" id="O80898"/>
<dbReference type="STRING" id="3702.O80898"/>
<dbReference type="CAZy" id="GT2">
    <property type="family name" value="Glycosyltransferase Family 2"/>
</dbReference>
<dbReference type="PaxDb" id="3702-AT2G32610.1"/>
<dbReference type="ProteomicsDB" id="220360"/>
<dbReference type="EnsemblPlants" id="AT2G32610.1">
    <property type="protein sequence ID" value="AT2G32610.1"/>
    <property type="gene ID" value="AT2G32610"/>
</dbReference>
<dbReference type="GeneID" id="817821"/>
<dbReference type="Gramene" id="AT2G32610.1">
    <property type="protein sequence ID" value="AT2G32610.1"/>
    <property type="gene ID" value="AT2G32610"/>
</dbReference>
<dbReference type="KEGG" id="ath:AT2G32610"/>
<dbReference type="Araport" id="AT2G32610"/>
<dbReference type="TAIR" id="AT2G32610">
    <property type="gene designation" value="CSLB01"/>
</dbReference>
<dbReference type="eggNOG" id="ENOG502QTT0">
    <property type="taxonomic scope" value="Eukaryota"/>
</dbReference>
<dbReference type="HOGENOM" id="CLU_001418_3_3_1"/>
<dbReference type="InParanoid" id="O80898"/>
<dbReference type="OMA" id="NIHRRGW"/>
<dbReference type="PhylomeDB" id="O80898"/>
<dbReference type="BioCyc" id="ARA:AT2G32610-MONOMER"/>
<dbReference type="PRO" id="PR:O80898"/>
<dbReference type="Proteomes" id="UP000006548">
    <property type="component" value="Chromosome 2"/>
</dbReference>
<dbReference type="ExpressionAtlas" id="O80898">
    <property type="expression patterns" value="baseline and differential"/>
</dbReference>
<dbReference type="GO" id="GO:0000139">
    <property type="term" value="C:Golgi membrane"/>
    <property type="evidence" value="ECO:0007669"/>
    <property type="project" value="UniProtKB-SubCell"/>
</dbReference>
<dbReference type="GO" id="GO:0016020">
    <property type="term" value="C:membrane"/>
    <property type="evidence" value="ECO:0007005"/>
    <property type="project" value="TAIR"/>
</dbReference>
<dbReference type="GO" id="GO:0016760">
    <property type="term" value="F:cellulose synthase (UDP-forming) activity"/>
    <property type="evidence" value="ECO:0007669"/>
    <property type="project" value="InterPro"/>
</dbReference>
<dbReference type="GO" id="GO:0071555">
    <property type="term" value="P:cell wall organization"/>
    <property type="evidence" value="ECO:0007669"/>
    <property type="project" value="UniProtKB-KW"/>
</dbReference>
<dbReference type="GO" id="GO:0030244">
    <property type="term" value="P:cellulose biosynthetic process"/>
    <property type="evidence" value="ECO:0007669"/>
    <property type="project" value="InterPro"/>
</dbReference>
<dbReference type="FunFam" id="3.90.550.10:FF:000162">
    <property type="entry name" value="Cellulose synthase-like B6"/>
    <property type="match status" value="1"/>
</dbReference>
<dbReference type="Gene3D" id="3.90.550.10">
    <property type="entry name" value="Spore Coat Polysaccharide Biosynthesis Protein SpsA, Chain A"/>
    <property type="match status" value="1"/>
</dbReference>
<dbReference type="InterPro" id="IPR005150">
    <property type="entry name" value="Cellulose_synth"/>
</dbReference>
<dbReference type="InterPro" id="IPR029044">
    <property type="entry name" value="Nucleotide-diphossugar_trans"/>
</dbReference>
<dbReference type="PANTHER" id="PTHR13301">
    <property type="entry name" value="X-BOX TRANSCRIPTION FACTOR-RELATED"/>
    <property type="match status" value="1"/>
</dbReference>
<dbReference type="Pfam" id="PF03552">
    <property type="entry name" value="Cellulose_synt"/>
    <property type="match status" value="2"/>
</dbReference>
<dbReference type="SUPFAM" id="SSF53448">
    <property type="entry name" value="Nucleotide-diphospho-sugar transferases"/>
    <property type="match status" value="1"/>
</dbReference>
<protein>
    <recommendedName>
        <fullName>Cellulose synthase-like protein B1</fullName>
        <shortName>AtCslB1</shortName>
        <ecNumber>2.4.1.-</ecNumber>
    </recommendedName>
</protein>
<keyword id="KW-0961">Cell wall biogenesis/degradation</keyword>
<keyword id="KW-0175">Coiled coil</keyword>
<keyword id="KW-0328">Glycosyltransferase</keyword>
<keyword id="KW-0333">Golgi apparatus</keyword>
<keyword id="KW-0472">Membrane</keyword>
<keyword id="KW-1185">Reference proteome</keyword>
<keyword id="KW-0808">Transferase</keyword>
<keyword id="KW-0812">Transmembrane</keyword>
<keyword id="KW-1133">Transmembrane helix</keyword>
<comment type="function">
    <text>Thought to be a Golgi-localized beta-glycan synthase that polymerize the backbones of noncellulosic polysaccharides (hemicelluloses) of plant cell wall.</text>
</comment>
<comment type="subcellular location">
    <subcellularLocation>
        <location evidence="3">Golgi apparatus membrane</location>
        <topology evidence="3">Multi-pass membrane protein</topology>
    </subcellularLocation>
</comment>
<comment type="tissue specificity">
    <text evidence="2">Expressed in young seedlings, primarily in the vascular tissue.</text>
</comment>
<comment type="similarity">
    <text evidence="3">Belongs to the glycosyltransferase 2 family. Plant cellulose synthase-like B subfamily.</text>
</comment>
<comment type="sequence caution" evidence="3">
    <conflict type="erroneous gene model prediction">
        <sequence resource="EMBL-CDS" id="AAC25943"/>
    </conflict>
</comment>
<accession>O80898</accession>
<sequence>MADSSFSLPPLCERISYTNYFLRAVYLTVLGLFFSLLLHRIRHTSEYDNVWLVAFFCESCFFLVCLLITCLKWSPADTKPFPDRLDERVHDLPSVDMFVPTADPVREPPIMVVDTVLSLLAVNYPANKLACYVSDDGCSPLTYFSLKEASKFAKIWVPFCKKYNTRVRAPSRYFLKPISVATEDYEFNRDWEKTKREYEKLRRKVEDATGDSHMLDVEDDFEAFSNTKPNDHSTLVKVVWENKGGVGDEKEIPHIIYISREKRPNYVHNQKCGAMNFLARVSGLMTNAPYILNVDCDMYANDADVVRQAMCILLQESLNMKHCAFVQFRQEFYDSSTELIVVLQSHLGRGIAGIQGPIYIGSGCVHTRRVMYGLSPDDFEVDGSLSSVATREFLVKDSLARRFGNSKEMMKSVVDAIQRNPNPQNILTNSIEAAREVGHCQYEYQTSWGNTIGWLYDSVAEDLNTSIGIHSRGWTSSYISPDTPAFLGSMPAGVPEALLQQRRWATGWIEILFNKQSPLRGLFSKKIRFRQRLAYLCIITCLRSIPELIYCLLPAYCLLHNSTLFPKGLYLGITVTLVGIHCLYTLWEFMSLGYSVQSWLVSQSVWRIVATSSWLFSIFDITLKLLGISETVFIITKKTVAGTKSALGSGPSQGEDVGPNSDLFKFEFDGSLCFLPGTFIVLVNIAALAVFSVGLQRSSYSHEGGGSGLAEACGCVLVMMLFLPFLMGLFKKGKYGTPLSTLSIAGFLAVLFVVFSV</sequence>
<evidence type="ECO:0000255" key="1"/>
<evidence type="ECO:0000269" key="2">
    <source>
    </source>
</evidence>
<evidence type="ECO:0000305" key="3"/>
<reference key="1">
    <citation type="journal article" date="1999" name="Nature">
        <title>Sequence and analysis of chromosome 2 of the plant Arabidopsis thaliana.</title>
        <authorList>
            <person name="Lin X."/>
            <person name="Kaul S."/>
            <person name="Rounsley S.D."/>
            <person name="Shea T.P."/>
            <person name="Benito M.-I."/>
            <person name="Town C.D."/>
            <person name="Fujii C.Y."/>
            <person name="Mason T.M."/>
            <person name="Bowman C.L."/>
            <person name="Barnstead M.E."/>
            <person name="Feldblyum T.V."/>
            <person name="Buell C.R."/>
            <person name="Ketchum K.A."/>
            <person name="Lee J.J."/>
            <person name="Ronning C.M."/>
            <person name="Koo H.L."/>
            <person name="Moffat K.S."/>
            <person name="Cronin L.A."/>
            <person name="Shen M."/>
            <person name="Pai G."/>
            <person name="Van Aken S."/>
            <person name="Umayam L."/>
            <person name="Tallon L.J."/>
            <person name="Gill J.E."/>
            <person name="Adams M.D."/>
            <person name="Carrera A.J."/>
            <person name="Creasy T.H."/>
            <person name="Goodman H.M."/>
            <person name="Somerville C.R."/>
            <person name="Copenhaver G.P."/>
            <person name="Preuss D."/>
            <person name="Nierman W.C."/>
            <person name="White O."/>
            <person name="Eisen J.A."/>
            <person name="Salzberg S.L."/>
            <person name="Fraser C.M."/>
            <person name="Venter J.C."/>
        </authorList>
    </citation>
    <scope>NUCLEOTIDE SEQUENCE [LARGE SCALE GENOMIC DNA]</scope>
    <source>
        <strain>cv. Columbia</strain>
    </source>
</reference>
<reference key="2">
    <citation type="journal article" date="2017" name="Plant J.">
        <title>Araport11: a complete reannotation of the Arabidopsis thaliana reference genome.</title>
        <authorList>
            <person name="Cheng C.Y."/>
            <person name="Krishnakumar V."/>
            <person name="Chan A.P."/>
            <person name="Thibaud-Nissen F."/>
            <person name="Schobel S."/>
            <person name="Town C.D."/>
        </authorList>
    </citation>
    <scope>GENOME REANNOTATION</scope>
    <source>
        <strain>cv. Columbia</strain>
    </source>
</reference>
<reference key="3">
    <citation type="journal article" date="2000" name="Plant Physiol.">
        <title>The cellulose synthase superfamily.</title>
        <authorList>
            <person name="Richmond T.A."/>
            <person name="Somerville C.R."/>
        </authorList>
    </citation>
    <scope>GENE FAMILY</scope>
    <scope>NOMENCLATURE</scope>
</reference>
<reference key="4">
    <citation type="journal article" date="2001" name="Plant Mol. Biol.">
        <title>Integrative approaches to determining Csl function.</title>
        <authorList>
            <person name="Richmond T.A."/>
            <person name="Somerville C.R."/>
        </authorList>
    </citation>
    <scope>TISSUE SPECIFICITY</scope>
</reference>
<name>CSLB1_ARATH</name>
<feature type="chain" id="PRO_0000319335" description="Cellulose synthase-like protein B1">
    <location>
        <begin position="1"/>
        <end position="757"/>
    </location>
</feature>
<feature type="transmembrane region" description="Helical" evidence="1">
    <location>
        <begin position="18"/>
        <end position="38"/>
    </location>
</feature>
<feature type="transmembrane region" description="Helical" evidence="1">
    <location>
        <begin position="50"/>
        <end position="70"/>
    </location>
</feature>
<feature type="transmembrane region" description="Helical" evidence="1">
    <location>
        <begin position="533"/>
        <end position="553"/>
    </location>
</feature>
<feature type="transmembrane region" description="Helical" evidence="1">
    <location>
        <begin position="569"/>
        <end position="589"/>
    </location>
</feature>
<feature type="transmembrane region" description="Helical" evidence="1">
    <location>
        <begin position="615"/>
        <end position="635"/>
    </location>
</feature>
<feature type="transmembrane region" description="Helical" evidence="1">
    <location>
        <begin position="674"/>
        <end position="694"/>
    </location>
</feature>
<feature type="transmembrane region" description="Helical" evidence="1">
    <location>
        <begin position="710"/>
        <end position="730"/>
    </location>
</feature>
<feature type="transmembrane region" description="Helical" evidence="1">
    <location>
        <begin position="737"/>
        <end position="757"/>
    </location>
</feature>
<feature type="coiled-coil region" evidence="1">
    <location>
        <begin position="186"/>
        <end position="216"/>
    </location>
</feature>
<feature type="active site" evidence="1">
    <location>
        <position position="136"/>
    </location>
</feature>
<feature type="active site" evidence="1">
    <location>
        <position position="462"/>
    </location>
</feature>
<proteinExistence type="evidence at transcript level"/>
<organism>
    <name type="scientific">Arabidopsis thaliana</name>
    <name type="common">Mouse-ear cress</name>
    <dbReference type="NCBI Taxonomy" id="3702"/>
    <lineage>
        <taxon>Eukaryota</taxon>
        <taxon>Viridiplantae</taxon>
        <taxon>Streptophyta</taxon>
        <taxon>Embryophyta</taxon>
        <taxon>Tracheophyta</taxon>
        <taxon>Spermatophyta</taxon>
        <taxon>Magnoliopsida</taxon>
        <taxon>eudicotyledons</taxon>
        <taxon>Gunneridae</taxon>
        <taxon>Pentapetalae</taxon>
        <taxon>rosids</taxon>
        <taxon>malvids</taxon>
        <taxon>Brassicales</taxon>
        <taxon>Brassicaceae</taxon>
        <taxon>Camelineae</taxon>
        <taxon>Arabidopsis</taxon>
    </lineage>
</organism>
<gene>
    <name type="primary">CSLB1</name>
    <name type="ordered locus">At2g32610</name>
    <name type="ORF">T26B15.17</name>
</gene>